<protein>
    <recommendedName>
        <fullName evidence="1">Poly [ADP-ribose] polymerase 2</fullName>
        <ecNumber evidence="6 7">2.4.2.30</ecNumber>
    </recommendedName>
    <alternativeName>
        <fullName evidence="9">Poly ADP-ribose metabolism enzyme 2</fullName>
    </alternativeName>
    <alternativeName>
        <fullName evidence="9">Protein poly-ADP-ribosyltransferase parp-2</fullName>
        <ecNumber evidence="9">2.4.2.-</ecNumber>
    </alternativeName>
</protein>
<proteinExistence type="evidence at protein level"/>
<gene>
    <name evidence="10" type="primary">parp-2</name>
    <name evidence="8 10" type="synonym">pme-2</name>
    <name evidence="10" type="ORF">E02H1.4</name>
</gene>
<name>PARP2_CAEEL</name>
<sequence>MSIINDENGRGYKVHLCKTNIAQNNNKFYDMELLDEGGDFIVKLINGRIGYRGVTQLKDFDDLDRAKKFFESKFYEKTHLHWEERDDEPVPNKYAVVELATNARQTEKEVKKEEPEPEPKVDEKNTRGRKKRGIVKEKKEIKKEEEPVEEVNEKLKELMKCICDEDVHLGLLKQLKFNEAFGRPIDCLSLAQLTTGYEILSKIEESIGGKSARRSTRGRPRVADRVLAVKSDGPSLHDINKYYSLIPHSFGFCVPPKIDSHAKIQAERELLDALKGSIEASLELKDLKKTASSKDIYQRLYERLPCHLEPVSEEIAGKIGDCLAMRGPTHCYKLSLIDAFELKDPNEIPTEAPVEVQEVPKKRGRKSTKTAAPTVPPPTTKRLLWHGTRVTNVFSILMNGLQFPVGDRCGLMFGNGVYFANVPTKSANYCCPEASKRVFMLLCEVETANPLVLYESEIDADEKMEKAKKTSVYAAGKHTPRDTVEINGIPAFKSNLETIEEETRLLYDEYVMFNKEHFKIKYVVEVKVDRLTAKEMMA</sequence>
<evidence type="ECO:0000250" key="1">
    <source>
        <dbReference type="UniProtKB" id="Q9UGN5"/>
    </source>
</evidence>
<evidence type="ECO:0000255" key="2">
    <source>
        <dbReference type="PROSITE-ProRule" id="PRU00397"/>
    </source>
</evidence>
<evidence type="ECO:0000255" key="3">
    <source>
        <dbReference type="PROSITE-ProRule" id="PRU00398"/>
    </source>
</evidence>
<evidence type="ECO:0000255" key="4">
    <source>
        <dbReference type="PROSITE-ProRule" id="PRU01321"/>
    </source>
</evidence>
<evidence type="ECO:0000256" key="5">
    <source>
        <dbReference type="SAM" id="MobiDB-lite"/>
    </source>
</evidence>
<evidence type="ECO:0000269" key="6">
    <source>
    </source>
</evidence>
<evidence type="ECO:0000269" key="7">
    <source>
    </source>
</evidence>
<evidence type="ECO:0000303" key="8">
    <source>
    </source>
</evidence>
<evidence type="ECO:0000305" key="9"/>
<evidence type="ECO:0000312" key="10">
    <source>
        <dbReference type="WormBase" id="E02H1.4"/>
    </source>
</evidence>
<feature type="chain" id="PRO_0000211336" description="Poly [ADP-ribose] polymerase 2">
    <location>
        <begin position="1"/>
        <end position="538"/>
    </location>
</feature>
<feature type="domain" description="WGR" evidence="4">
    <location>
        <begin position="1"/>
        <end position="94"/>
    </location>
</feature>
<feature type="domain" description="PARP alpha-helical" evidence="3">
    <location>
        <begin position="148"/>
        <end position="285"/>
    </location>
</feature>
<feature type="domain" description="PARP catalytic" evidence="2">
    <location>
        <begin position="309"/>
        <end position="535"/>
    </location>
</feature>
<feature type="region of interest" description="Disordered" evidence="5">
    <location>
        <begin position="104"/>
        <end position="133"/>
    </location>
</feature>
<feature type="region of interest" description="Disordered" evidence="5">
    <location>
        <begin position="357"/>
        <end position="381"/>
    </location>
</feature>
<feature type="compositionally biased region" description="Basic and acidic residues" evidence="5">
    <location>
        <begin position="105"/>
        <end position="126"/>
    </location>
</feature>
<reference key="1">
    <citation type="journal article" date="2002" name="Biochem. J.">
        <title>The genes pme-1 and pme-2 encode two poly(ADP-ribose) polymerases in Caenorhabditis elegans.</title>
        <authorList>
            <person name="Gagnon S.N."/>
            <person name="Hengartner M.O."/>
            <person name="Desnoyers S."/>
        </authorList>
    </citation>
    <scope>NUCLEOTIDE SEQUENCE [MRNA]</scope>
    <scope>CATALYTIC ACTIVITY</scope>
    <scope>DEVELOPMENTAL STAGE</scope>
</reference>
<reference key="2">
    <citation type="journal article" date="1998" name="Science">
        <title>Genome sequence of the nematode C. elegans: a platform for investigating biology.</title>
        <authorList>
            <consortium name="The C. elegans sequencing consortium"/>
        </authorList>
    </citation>
    <scope>NUCLEOTIDE SEQUENCE [LARGE SCALE GENOMIC DNA]</scope>
    <source>
        <strain>Bristol N2</strain>
    </source>
</reference>
<reference key="3">
    <citation type="journal article" date="2005" name="DNA Repair">
        <title>Ionizing radiations in Caenorhabditis elegans induce poly(ADP-ribosyl)ation, a conserved DNA-damage response essential for survival.</title>
        <authorList>
            <person name="Dequen F."/>
            <person name="Gagnon S.N."/>
            <person name="Desnoyers S."/>
        </authorList>
    </citation>
    <scope>FUNCTION</scope>
    <scope>CATALYTIC ACTIVITY</scope>
    <scope>ACTIVITY REGULATION</scope>
</reference>
<organism>
    <name type="scientific">Caenorhabditis elegans</name>
    <dbReference type="NCBI Taxonomy" id="6239"/>
    <lineage>
        <taxon>Eukaryota</taxon>
        <taxon>Metazoa</taxon>
        <taxon>Ecdysozoa</taxon>
        <taxon>Nematoda</taxon>
        <taxon>Chromadorea</taxon>
        <taxon>Rhabditida</taxon>
        <taxon>Rhabditina</taxon>
        <taxon>Rhabditomorpha</taxon>
        <taxon>Rhabditoidea</taxon>
        <taxon>Rhabditidae</taxon>
        <taxon>Peloderinae</taxon>
        <taxon>Caenorhabditis</taxon>
    </lineage>
</organism>
<dbReference type="EC" id="2.4.2.30" evidence="6 7"/>
<dbReference type="EC" id="2.4.2.-" evidence="9"/>
<dbReference type="EMBL" id="AF500111">
    <property type="protein sequence ID" value="AAM27196.1"/>
    <property type="molecule type" value="mRNA"/>
</dbReference>
<dbReference type="EMBL" id="BX284602">
    <property type="protein sequence ID" value="CAA87379.1"/>
    <property type="molecule type" value="Genomic_DNA"/>
</dbReference>
<dbReference type="PIR" id="T20414">
    <property type="entry name" value="T20414"/>
</dbReference>
<dbReference type="RefSeq" id="NP_001022057.1">
    <property type="nucleotide sequence ID" value="NM_001026886.6"/>
</dbReference>
<dbReference type="SMR" id="Q09525"/>
<dbReference type="BioGRID" id="533285">
    <property type="interactions" value="4"/>
</dbReference>
<dbReference type="FunCoup" id="Q09525">
    <property type="interactions" value="28"/>
</dbReference>
<dbReference type="IntAct" id="Q09525">
    <property type="interactions" value="1"/>
</dbReference>
<dbReference type="MINT" id="Q09525"/>
<dbReference type="STRING" id="6239.E02H1.4.1"/>
<dbReference type="PaxDb" id="6239-E02H1.4"/>
<dbReference type="PeptideAtlas" id="Q09525"/>
<dbReference type="EnsemblMetazoa" id="E02H1.4.1">
    <property type="protein sequence ID" value="E02H1.4.1"/>
    <property type="gene ID" value="WBGene00004050"/>
</dbReference>
<dbReference type="EnsemblMetazoa" id="E02H1.4.2">
    <property type="protein sequence ID" value="E02H1.4.2"/>
    <property type="gene ID" value="WBGene00004050"/>
</dbReference>
<dbReference type="GeneID" id="3565967"/>
<dbReference type="KEGG" id="cel:CELE_E02H1.4"/>
<dbReference type="UCSC" id="E02H1.4">
    <property type="organism name" value="c. elegans"/>
</dbReference>
<dbReference type="AGR" id="WB:WBGene00004050"/>
<dbReference type="CTD" id="3565967"/>
<dbReference type="WormBase" id="E02H1.4">
    <property type="protein sequence ID" value="CE01539"/>
    <property type="gene ID" value="WBGene00004050"/>
    <property type="gene designation" value="parp-2"/>
</dbReference>
<dbReference type="eggNOG" id="KOG1037">
    <property type="taxonomic scope" value="Eukaryota"/>
</dbReference>
<dbReference type="GeneTree" id="ENSGT00940000158452"/>
<dbReference type="HOGENOM" id="CLU_004841_1_0_1"/>
<dbReference type="InParanoid" id="Q09525"/>
<dbReference type="OMA" id="QGENDRF"/>
<dbReference type="OrthoDB" id="429950at2759"/>
<dbReference type="PhylomeDB" id="Q09525"/>
<dbReference type="PRO" id="PR:Q09525"/>
<dbReference type="Proteomes" id="UP000001940">
    <property type="component" value="Chromosome II"/>
</dbReference>
<dbReference type="Bgee" id="WBGene00004050">
    <property type="expression patterns" value="Expressed in embryo and 4 other cell types or tissues"/>
</dbReference>
<dbReference type="GO" id="GO:0005730">
    <property type="term" value="C:nucleolus"/>
    <property type="evidence" value="ECO:0000318"/>
    <property type="project" value="GO_Central"/>
</dbReference>
<dbReference type="GO" id="GO:0003950">
    <property type="term" value="F:NAD+ poly-ADP-ribosyltransferase activity"/>
    <property type="evidence" value="ECO:0000314"/>
    <property type="project" value="WormBase"/>
</dbReference>
<dbReference type="GO" id="GO:0140806">
    <property type="term" value="F:NAD+-protein-aspartate ADP-ribosyltransferase activity"/>
    <property type="evidence" value="ECO:0007669"/>
    <property type="project" value="RHEA"/>
</dbReference>
<dbReference type="GO" id="GO:0140807">
    <property type="term" value="F:NAD+-protein-glutamate ADP-ribosyltransferase activity"/>
    <property type="evidence" value="ECO:0007669"/>
    <property type="project" value="RHEA"/>
</dbReference>
<dbReference type="GO" id="GO:0016779">
    <property type="term" value="F:nucleotidyltransferase activity"/>
    <property type="evidence" value="ECO:0007669"/>
    <property type="project" value="UniProtKB-KW"/>
</dbReference>
<dbReference type="GO" id="GO:0006302">
    <property type="term" value="P:double-strand break repair"/>
    <property type="evidence" value="ECO:0000318"/>
    <property type="project" value="GO_Central"/>
</dbReference>
<dbReference type="CDD" id="cd01437">
    <property type="entry name" value="parp_like"/>
    <property type="match status" value="1"/>
</dbReference>
<dbReference type="FunFam" id="2.20.140.10:FF:000001">
    <property type="entry name" value="Poly [ADP-ribose] polymerase"/>
    <property type="match status" value="1"/>
</dbReference>
<dbReference type="FunFam" id="3.90.228.10:FF:000030">
    <property type="entry name" value="Poly [ADP-ribose] polymerase"/>
    <property type="match status" value="1"/>
</dbReference>
<dbReference type="Gene3D" id="3.90.228.10">
    <property type="match status" value="1"/>
</dbReference>
<dbReference type="Gene3D" id="1.20.142.10">
    <property type="entry name" value="Poly(ADP-ribose) polymerase, regulatory domain"/>
    <property type="match status" value="1"/>
</dbReference>
<dbReference type="Gene3D" id="2.20.140.10">
    <property type="entry name" value="WGR domain"/>
    <property type="match status" value="1"/>
</dbReference>
<dbReference type="InterPro" id="IPR050800">
    <property type="entry name" value="ARTD/PARP"/>
</dbReference>
<dbReference type="InterPro" id="IPR012317">
    <property type="entry name" value="Poly(ADP-ribose)pol_cat_dom"/>
</dbReference>
<dbReference type="InterPro" id="IPR004102">
    <property type="entry name" value="Poly(ADP-ribose)pol_reg_dom"/>
</dbReference>
<dbReference type="InterPro" id="IPR036616">
    <property type="entry name" value="Poly(ADP-ribose)pol_reg_dom_sf"/>
</dbReference>
<dbReference type="InterPro" id="IPR036930">
    <property type="entry name" value="WGR_dom_sf"/>
</dbReference>
<dbReference type="InterPro" id="IPR008893">
    <property type="entry name" value="WGR_domain"/>
</dbReference>
<dbReference type="PANTHER" id="PTHR10459">
    <property type="entry name" value="DNA LIGASE"/>
    <property type="match status" value="1"/>
</dbReference>
<dbReference type="PANTHER" id="PTHR10459:SF113">
    <property type="entry name" value="POLY [ADP-RIBOSE] POLYMERASE 2"/>
    <property type="match status" value="1"/>
</dbReference>
<dbReference type="Pfam" id="PF00644">
    <property type="entry name" value="PARP"/>
    <property type="match status" value="1"/>
</dbReference>
<dbReference type="Pfam" id="PF02877">
    <property type="entry name" value="PARP_reg"/>
    <property type="match status" value="1"/>
</dbReference>
<dbReference type="Pfam" id="PF05406">
    <property type="entry name" value="WGR"/>
    <property type="match status" value="1"/>
</dbReference>
<dbReference type="SMART" id="SM00773">
    <property type="entry name" value="WGR"/>
    <property type="match status" value="1"/>
</dbReference>
<dbReference type="SUPFAM" id="SSF56399">
    <property type="entry name" value="ADP-ribosylation"/>
    <property type="match status" value="1"/>
</dbReference>
<dbReference type="SUPFAM" id="SSF47587">
    <property type="entry name" value="Domain of poly(ADP-ribose) polymerase"/>
    <property type="match status" value="1"/>
</dbReference>
<dbReference type="SUPFAM" id="SSF142921">
    <property type="entry name" value="WGR domain-like"/>
    <property type="match status" value="1"/>
</dbReference>
<dbReference type="PROSITE" id="PS51060">
    <property type="entry name" value="PARP_ALPHA_HD"/>
    <property type="match status" value="1"/>
</dbReference>
<dbReference type="PROSITE" id="PS51059">
    <property type="entry name" value="PARP_CATALYTIC"/>
    <property type="match status" value="1"/>
</dbReference>
<dbReference type="PROSITE" id="PS51977">
    <property type="entry name" value="WGR"/>
    <property type="match status" value="1"/>
</dbReference>
<accession>Q09525</accession>
<keyword id="KW-0227">DNA damage</keyword>
<keyword id="KW-0234">DNA repair</keyword>
<keyword id="KW-0328">Glycosyltransferase</keyword>
<keyword id="KW-0520">NAD</keyword>
<keyword id="KW-0548">Nucleotidyltransferase</keyword>
<keyword id="KW-0539">Nucleus</keyword>
<keyword id="KW-1185">Reference proteome</keyword>
<keyword id="KW-0808">Transferase</keyword>
<comment type="function">
    <text evidence="7">Poly[ADP-ribose] polymerase modifies various nuclear proteins by poly(ADP-ribosyl)ation, a post-translational modification synthesized after DNA damage that appears as an obligatory step in a detection/signaling pathway leading to the reparation of DNA strand breaks and programmed cell death.</text>
</comment>
<comment type="catalytic activity">
    <reaction evidence="6 7">
        <text>NAD(+) + (ADP-D-ribosyl)n-acceptor = nicotinamide + (ADP-D-ribosyl)n+1-acceptor + H(+).</text>
        <dbReference type="EC" id="2.4.2.30"/>
    </reaction>
</comment>
<comment type="catalytic activity">
    <reaction evidence="9">
        <text>L-aspartyl-[protein] + NAD(+) = 4-O-(ADP-D-ribosyl)-L-aspartyl-[protein] + nicotinamide</text>
        <dbReference type="Rhea" id="RHEA:54424"/>
        <dbReference type="Rhea" id="RHEA-COMP:9867"/>
        <dbReference type="Rhea" id="RHEA-COMP:13832"/>
        <dbReference type="ChEBI" id="CHEBI:17154"/>
        <dbReference type="ChEBI" id="CHEBI:29961"/>
        <dbReference type="ChEBI" id="CHEBI:57540"/>
        <dbReference type="ChEBI" id="CHEBI:138102"/>
    </reaction>
    <physiologicalReaction direction="left-to-right" evidence="9">
        <dbReference type="Rhea" id="RHEA:54425"/>
    </physiologicalReaction>
</comment>
<comment type="catalytic activity">
    <reaction evidence="9">
        <text>L-glutamyl-[protein] + NAD(+) = 5-O-(ADP-D-ribosyl)-L-glutamyl-[protein] + nicotinamide</text>
        <dbReference type="Rhea" id="RHEA:58224"/>
        <dbReference type="Rhea" id="RHEA-COMP:10208"/>
        <dbReference type="Rhea" id="RHEA-COMP:15089"/>
        <dbReference type="ChEBI" id="CHEBI:17154"/>
        <dbReference type="ChEBI" id="CHEBI:29973"/>
        <dbReference type="ChEBI" id="CHEBI:57540"/>
        <dbReference type="ChEBI" id="CHEBI:142540"/>
    </reaction>
    <physiologicalReaction direction="left-to-right" evidence="9">
        <dbReference type="Rhea" id="RHEA:58225"/>
    </physiologicalReaction>
</comment>
<comment type="activity regulation">
    <text evidence="7">Inhibited by N-(6-oxo-5,6-dihydrophenanthridin-2-yl)-N,N-dimethylacetamide HCl (PJ34), 1,5-dihydroxyisoquinoline (DHQ) and 3-aminobenzamide (3AB).</text>
</comment>
<comment type="subcellular location">
    <subcellularLocation>
        <location evidence="1">Nucleus</location>
    </subcellularLocation>
</comment>
<comment type="developmental stage">
    <text evidence="6">Predominantly expressed at early embryonic stages and later in L4 and adult stages.</text>
</comment>
<comment type="similarity">
    <text evidence="9">Belongs to the ARTD/PARP family.</text>
</comment>